<protein>
    <recommendedName>
        <fullName evidence="1">Large ribosomal subunit protein uL5</fullName>
    </recommendedName>
    <alternativeName>
        <fullName evidence="2">50S ribosomal protein L5</fullName>
    </alternativeName>
</protein>
<accession>B2ITP3</accession>
<sequence>MATTRLKSLYQETIVPKLINQFQYTNVHQVPKLVKVTINRGLGEAAQNAKSLEASINEIALVTGQKPVVTRAKKAIAGFKIRQGMPVGIMVTLRAERMYAFFDRLVSLSLPRIRDFRGVSPKSFDGRGNYTLGVREQLIFPEVEYDSVDQVRGMDISIITTAKNDEEGRALLKELGMPFRDQ</sequence>
<gene>
    <name evidence="1" type="primary">rplE</name>
    <name evidence="1" type="synonym">rpl5</name>
    <name type="ordered locus">Npun_R4378</name>
</gene>
<dbReference type="EMBL" id="CP001037">
    <property type="protein sequence ID" value="ACC82751.1"/>
    <property type="molecule type" value="Genomic_DNA"/>
</dbReference>
<dbReference type="RefSeq" id="WP_012410713.1">
    <property type="nucleotide sequence ID" value="NC_010628.1"/>
</dbReference>
<dbReference type="SMR" id="B2ITP3"/>
<dbReference type="STRING" id="63737.Npun_R4378"/>
<dbReference type="EnsemblBacteria" id="ACC82751">
    <property type="protein sequence ID" value="ACC82751"/>
    <property type="gene ID" value="Npun_R4378"/>
</dbReference>
<dbReference type="KEGG" id="npu:Npun_R4378"/>
<dbReference type="eggNOG" id="COG0094">
    <property type="taxonomic scope" value="Bacteria"/>
</dbReference>
<dbReference type="HOGENOM" id="CLU_061015_2_1_3"/>
<dbReference type="OrthoDB" id="9806626at2"/>
<dbReference type="PhylomeDB" id="B2ITP3"/>
<dbReference type="Proteomes" id="UP000001191">
    <property type="component" value="Chromosome"/>
</dbReference>
<dbReference type="GO" id="GO:1990904">
    <property type="term" value="C:ribonucleoprotein complex"/>
    <property type="evidence" value="ECO:0007669"/>
    <property type="project" value="UniProtKB-KW"/>
</dbReference>
<dbReference type="GO" id="GO:0005840">
    <property type="term" value="C:ribosome"/>
    <property type="evidence" value="ECO:0007669"/>
    <property type="project" value="UniProtKB-KW"/>
</dbReference>
<dbReference type="GO" id="GO:0019843">
    <property type="term" value="F:rRNA binding"/>
    <property type="evidence" value="ECO:0007669"/>
    <property type="project" value="UniProtKB-UniRule"/>
</dbReference>
<dbReference type="GO" id="GO:0003735">
    <property type="term" value="F:structural constituent of ribosome"/>
    <property type="evidence" value="ECO:0007669"/>
    <property type="project" value="InterPro"/>
</dbReference>
<dbReference type="GO" id="GO:0000049">
    <property type="term" value="F:tRNA binding"/>
    <property type="evidence" value="ECO:0007669"/>
    <property type="project" value="UniProtKB-UniRule"/>
</dbReference>
<dbReference type="GO" id="GO:0006412">
    <property type="term" value="P:translation"/>
    <property type="evidence" value="ECO:0007669"/>
    <property type="project" value="UniProtKB-UniRule"/>
</dbReference>
<dbReference type="FunFam" id="3.30.1440.10:FF:000001">
    <property type="entry name" value="50S ribosomal protein L5"/>
    <property type="match status" value="1"/>
</dbReference>
<dbReference type="Gene3D" id="3.30.1440.10">
    <property type="match status" value="1"/>
</dbReference>
<dbReference type="HAMAP" id="MF_01333_B">
    <property type="entry name" value="Ribosomal_uL5_B"/>
    <property type="match status" value="1"/>
</dbReference>
<dbReference type="InterPro" id="IPR002132">
    <property type="entry name" value="Ribosomal_uL5"/>
</dbReference>
<dbReference type="InterPro" id="IPR020930">
    <property type="entry name" value="Ribosomal_uL5_bac-type"/>
</dbReference>
<dbReference type="InterPro" id="IPR031309">
    <property type="entry name" value="Ribosomal_uL5_C"/>
</dbReference>
<dbReference type="InterPro" id="IPR020929">
    <property type="entry name" value="Ribosomal_uL5_CS"/>
</dbReference>
<dbReference type="InterPro" id="IPR022803">
    <property type="entry name" value="Ribosomal_uL5_dom_sf"/>
</dbReference>
<dbReference type="InterPro" id="IPR031310">
    <property type="entry name" value="Ribosomal_uL5_N"/>
</dbReference>
<dbReference type="NCBIfam" id="NF000585">
    <property type="entry name" value="PRK00010.1"/>
    <property type="match status" value="1"/>
</dbReference>
<dbReference type="PANTHER" id="PTHR11994">
    <property type="entry name" value="60S RIBOSOMAL PROTEIN L11-RELATED"/>
    <property type="match status" value="1"/>
</dbReference>
<dbReference type="Pfam" id="PF00281">
    <property type="entry name" value="Ribosomal_L5"/>
    <property type="match status" value="1"/>
</dbReference>
<dbReference type="Pfam" id="PF00673">
    <property type="entry name" value="Ribosomal_L5_C"/>
    <property type="match status" value="1"/>
</dbReference>
<dbReference type="PIRSF" id="PIRSF002161">
    <property type="entry name" value="Ribosomal_L5"/>
    <property type="match status" value="1"/>
</dbReference>
<dbReference type="SUPFAM" id="SSF55282">
    <property type="entry name" value="RL5-like"/>
    <property type="match status" value="1"/>
</dbReference>
<dbReference type="PROSITE" id="PS00358">
    <property type="entry name" value="RIBOSOMAL_L5"/>
    <property type="match status" value="1"/>
</dbReference>
<feature type="chain" id="PRO_1000142426" description="Large ribosomal subunit protein uL5">
    <location>
        <begin position="1"/>
        <end position="182"/>
    </location>
</feature>
<reference key="1">
    <citation type="journal article" date="2013" name="Plant Physiol.">
        <title>A Nostoc punctiforme Sugar Transporter Necessary to Establish a Cyanobacterium-Plant Symbiosis.</title>
        <authorList>
            <person name="Ekman M."/>
            <person name="Picossi S."/>
            <person name="Campbell E.L."/>
            <person name="Meeks J.C."/>
            <person name="Flores E."/>
        </authorList>
    </citation>
    <scope>NUCLEOTIDE SEQUENCE [LARGE SCALE GENOMIC DNA]</scope>
    <source>
        <strain>ATCC 29133 / PCC 73102</strain>
    </source>
</reference>
<evidence type="ECO:0000255" key="1">
    <source>
        <dbReference type="HAMAP-Rule" id="MF_01333"/>
    </source>
</evidence>
<evidence type="ECO:0000305" key="2"/>
<organism>
    <name type="scientific">Nostoc punctiforme (strain ATCC 29133 / PCC 73102)</name>
    <dbReference type="NCBI Taxonomy" id="63737"/>
    <lineage>
        <taxon>Bacteria</taxon>
        <taxon>Bacillati</taxon>
        <taxon>Cyanobacteriota</taxon>
        <taxon>Cyanophyceae</taxon>
        <taxon>Nostocales</taxon>
        <taxon>Nostocaceae</taxon>
        <taxon>Nostoc</taxon>
    </lineage>
</organism>
<keyword id="KW-1185">Reference proteome</keyword>
<keyword id="KW-0687">Ribonucleoprotein</keyword>
<keyword id="KW-0689">Ribosomal protein</keyword>
<keyword id="KW-0694">RNA-binding</keyword>
<keyword id="KW-0699">rRNA-binding</keyword>
<keyword id="KW-0820">tRNA-binding</keyword>
<proteinExistence type="inferred from homology"/>
<comment type="function">
    <text evidence="1">This is one of the proteins that bind and probably mediate the attachment of the 5S RNA into the large ribosomal subunit, where it forms part of the central protuberance. In the 70S ribosome it contacts protein S13 of the 30S subunit (bridge B1b), connecting the 2 subunits; this bridge is implicated in subunit movement. Contacts the P site tRNA; the 5S rRNA and some of its associated proteins might help stabilize positioning of ribosome-bound tRNAs.</text>
</comment>
<comment type="subunit">
    <text evidence="1">Part of the 50S ribosomal subunit; part of the 5S rRNA/L5/L18/L25 subcomplex. Contacts the 5S rRNA and the P site tRNA. Forms a bridge to the 30S subunit in the 70S ribosome.</text>
</comment>
<comment type="similarity">
    <text evidence="1">Belongs to the universal ribosomal protein uL5 family.</text>
</comment>
<name>RL5_NOSP7</name>